<protein>
    <recommendedName>
        <fullName evidence="1">Ubiquinone biosynthesis protein COQ4 homolog, mitochondrial</fullName>
    </recommendedName>
    <alternativeName>
        <fullName>4-hydroxy-3-methoxy-5-polyprenylbenzoate decarboxylase</fullName>
        <ecNumber evidence="1">4.1.1.130</ecNumber>
    </alternativeName>
    <alternativeName>
        <fullName evidence="1">Coenzyme Q biosynthesis protein 4 homolog</fullName>
    </alternativeName>
</protein>
<organism>
    <name type="scientific">Leishmania major</name>
    <dbReference type="NCBI Taxonomy" id="5664"/>
    <lineage>
        <taxon>Eukaryota</taxon>
        <taxon>Discoba</taxon>
        <taxon>Euglenozoa</taxon>
        <taxon>Kinetoplastea</taxon>
        <taxon>Metakinetoplastina</taxon>
        <taxon>Trypanosomatida</taxon>
        <taxon>Trypanosomatidae</taxon>
        <taxon>Leishmaniinae</taxon>
        <taxon>Leishmania</taxon>
    </lineage>
</organism>
<gene>
    <name type="ORF">LmjF09.1430</name>
    <name type="ORF">LMJF_09_1430</name>
</gene>
<proteinExistence type="inferred from homology"/>
<reference key="1">
    <citation type="journal article" date="2005" name="Science">
        <title>The genome of the kinetoplastid parasite, Leishmania major.</title>
        <authorList>
            <person name="Ivens A.C."/>
            <person name="Peacock C.S."/>
            <person name="Worthey E.A."/>
            <person name="Murphy L."/>
            <person name="Aggarwal G."/>
            <person name="Berriman M."/>
            <person name="Sisk E."/>
            <person name="Rajandream M.A."/>
            <person name="Adlem E."/>
            <person name="Aert R."/>
            <person name="Anupama A."/>
            <person name="Apostolou Z."/>
            <person name="Attipoe P."/>
            <person name="Bason N."/>
            <person name="Bauser C."/>
            <person name="Beck A."/>
            <person name="Beverley S.M."/>
            <person name="Bianchettin G."/>
            <person name="Borzym K."/>
            <person name="Bothe G."/>
            <person name="Bruschi C.V."/>
            <person name="Collins M."/>
            <person name="Cadag E."/>
            <person name="Ciarloni L."/>
            <person name="Clayton C."/>
            <person name="Coulson R.M.R."/>
            <person name="Cronin A."/>
            <person name="Cruz A.K."/>
            <person name="Davies R.M."/>
            <person name="De Gaudenzi J."/>
            <person name="Dobson D.E."/>
            <person name="Duesterhoeft A."/>
            <person name="Fazelina G."/>
            <person name="Fosker N."/>
            <person name="Frasch A.C."/>
            <person name="Fraser A."/>
            <person name="Fuchs M."/>
            <person name="Gabel C."/>
            <person name="Goble A."/>
            <person name="Goffeau A."/>
            <person name="Harris D."/>
            <person name="Hertz-Fowler C."/>
            <person name="Hilbert H."/>
            <person name="Horn D."/>
            <person name="Huang Y."/>
            <person name="Klages S."/>
            <person name="Knights A."/>
            <person name="Kube M."/>
            <person name="Larke N."/>
            <person name="Litvin L."/>
            <person name="Lord A."/>
            <person name="Louie T."/>
            <person name="Marra M."/>
            <person name="Masuy D."/>
            <person name="Matthews K."/>
            <person name="Michaeli S."/>
            <person name="Mottram J.C."/>
            <person name="Mueller-Auer S."/>
            <person name="Munden H."/>
            <person name="Nelson S."/>
            <person name="Norbertczak H."/>
            <person name="Oliver K."/>
            <person name="O'neil S."/>
            <person name="Pentony M."/>
            <person name="Pohl T.M."/>
            <person name="Price C."/>
            <person name="Purnelle B."/>
            <person name="Quail M.A."/>
            <person name="Rabbinowitsch E."/>
            <person name="Reinhardt R."/>
            <person name="Rieger M."/>
            <person name="Rinta J."/>
            <person name="Robben J."/>
            <person name="Robertson L."/>
            <person name="Ruiz J.C."/>
            <person name="Rutter S."/>
            <person name="Saunders D."/>
            <person name="Schaefer M."/>
            <person name="Schein J."/>
            <person name="Schwartz D.C."/>
            <person name="Seeger K."/>
            <person name="Seyler A."/>
            <person name="Sharp S."/>
            <person name="Shin H."/>
            <person name="Sivam D."/>
            <person name="Squares R."/>
            <person name="Squares S."/>
            <person name="Tosato V."/>
            <person name="Vogt C."/>
            <person name="Volckaert G."/>
            <person name="Wambutt R."/>
            <person name="Warren T."/>
            <person name="Wedler H."/>
            <person name="Woodward J."/>
            <person name="Zhou S."/>
            <person name="Zimmermann W."/>
            <person name="Smith D.F."/>
            <person name="Blackwell J.M."/>
            <person name="Stuart K.D."/>
            <person name="Barrell B.G."/>
            <person name="Myler P.J."/>
        </authorList>
    </citation>
    <scope>NUCLEOTIDE SEQUENCE [LARGE SCALE GENOMIC DNA]</scope>
    <source>
        <strain>MHOM/IL/81/Friedlin</strain>
    </source>
</reference>
<accession>Q4QHN2</accession>
<name>COQ4_LEIMA</name>
<keyword id="KW-0456">Lyase</keyword>
<keyword id="KW-0472">Membrane</keyword>
<keyword id="KW-0479">Metal-binding</keyword>
<keyword id="KW-0496">Mitochondrion</keyword>
<keyword id="KW-0999">Mitochondrion inner membrane</keyword>
<keyword id="KW-1185">Reference proteome</keyword>
<keyword id="KW-0831">Ubiquinone biosynthesis</keyword>
<keyword id="KW-0862">Zinc</keyword>
<evidence type="ECO:0000255" key="1">
    <source>
        <dbReference type="HAMAP-Rule" id="MF_03111"/>
    </source>
</evidence>
<sequence length="187" mass="21366">MKNCMMADQRGRSILQYQPIVGDEALEFSRGLAPSTFGFRYAAYMDRNHFLPSGRTAVKHIADPTLAYVMTRYRQCHDFVHIITGCGRSIEEELAVKIFEWKHTGLPLGLLSLLGGAPRLSAAQWAHIRLYWEWASRNAPSSRHGEPAVPMYLNVPWEDMLAKEYDEVVAYTGITPLPDFLEKRQKH</sequence>
<comment type="function">
    <text evidence="1">Lyase that catalyzes the C1-decarboxylation of 4-hydroxy-3-methoxy-5-(all-trans-polyprenyl)benzoic acid into 2-methoxy-6-(all-trans-polyprenyl)phenol during ubiquinone biosynthesis.</text>
</comment>
<comment type="catalytic activity">
    <reaction evidence="1">
        <text>a 4-hydroxy-3-methoxy-5-(all-trans-polyprenyl)benzoate + H(+) = a 2-methoxy-6-(all-trans-polyprenyl)phenol + CO2</text>
        <dbReference type="Rhea" id="RHEA:81179"/>
        <dbReference type="Rhea" id="RHEA-COMP:9551"/>
        <dbReference type="Rhea" id="RHEA-COMP:10931"/>
        <dbReference type="ChEBI" id="CHEBI:15378"/>
        <dbReference type="ChEBI" id="CHEBI:16526"/>
        <dbReference type="ChEBI" id="CHEBI:62731"/>
        <dbReference type="ChEBI" id="CHEBI:84443"/>
        <dbReference type="EC" id="4.1.1.130"/>
    </reaction>
</comment>
<comment type="cofactor">
    <cofactor evidence="1">
        <name>Zn(2+)</name>
        <dbReference type="ChEBI" id="CHEBI:29105"/>
    </cofactor>
</comment>
<comment type="pathway">
    <text evidence="1">Cofactor biosynthesis; ubiquinone biosynthesis.</text>
</comment>
<comment type="subunit">
    <text evidence="1">Component of a multi-subunit COQ enzyme complex.</text>
</comment>
<comment type="subcellular location">
    <subcellularLocation>
        <location evidence="1">Mitochondrion inner membrane</location>
        <topology evidence="1">Peripheral membrane protein</topology>
        <orientation evidence="1">Matrix side</orientation>
    </subcellularLocation>
</comment>
<comment type="miscellaneous">
    <text evidence="1">This protein may be expected to contain an N-terminal transit peptide but none has been predicted.</text>
</comment>
<comment type="similarity">
    <text evidence="1">Belongs to the COQ4 family.</text>
</comment>
<feature type="chain" id="PRO_0000388085" description="Ubiquinone biosynthesis protein COQ4 homolog, mitochondrial">
    <location>
        <begin position="1"/>
        <end position="187"/>
    </location>
</feature>
<feature type="binding site" evidence="1">
    <location>
        <position position="77"/>
    </location>
    <ligand>
        <name>Zn(2+)</name>
        <dbReference type="ChEBI" id="CHEBI:29105"/>
    </ligand>
</feature>
<feature type="binding site" evidence="1">
    <location>
        <position position="78"/>
    </location>
    <ligand>
        <name>Zn(2+)</name>
        <dbReference type="ChEBI" id="CHEBI:29105"/>
    </ligand>
</feature>
<feature type="binding site" evidence="1">
    <location>
        <position position="81"/>
    </location>
    <ligand>
        <name>Zn(2+)</name>
        <dbReference type="ChEBI" id="CHEBI:29105"/>
    </ligand>
</feature>
<feature type="binding site" evidence="1">
    <location>
        <position position="93"/>
    </location>
    <ligand>
        <name>Zn(2+)</name>
        <dbReference type="ChEBI" id="CHEBI:29105"/>
    </ligand>
</feature>
<dbReference type="EC" id="4.1.1.130" evidence="1"/>
<dbReference type="EMBL" id="FR796405">
    <property type="protein sequence ID" value="CAJ03081.1"/>
    <property type="molecule type" value="Genomic_DNA"/>
</dbReference>
<dbReference type="RefSeq" id="XP_001681316.1">
    <property type="nucleotide sequence ID" value="XM_001681264.1"/>
</dbReference>
<dbReference type="SMR" id="Q4QHN2"/>
<dbReference type="FunCoup" id="Q4QHN2">
    <property type="interactions" value="173"/>
</dbReference>
<dbReference type="STRING" id="5664.Q4QHN2"/>
<dbReference type="EnsemblProtists" id="CAJ03081">
    <property type="protein sequence ID" value="CAJ03081"/>
    <property type="gene ID" value="LMJF_09_1430"/>
</dbReference>
<dbReference type="GeneID" id="5649583"/>
<dbReference type="KEGG" id="lma:LMJF_09_1430"/>
<dbReference type="VEuPathDB" id="TriTrypDB:LmjF.09.1430"/>
<dbReference type="VEuPathDB" id="TriTrypDB:LMJFC_090021600"/>
<dbReference type="VEuPathDB" id="TriTrypDB:LMJLV39_090021700"/>
<dbReference type="VEuPathDB" id="TriTrypDB:LMJSD75_090021400"/>
<dbReference type="eggNOG" id="KOG3244">
    <property type="taxonomic scope" value="Eukaryota"/>
</dbReference>
<dbReference type="InParanoid" id="Q4QHN2"/>
<dbReference type="OMA" id="WFEMINT"/>
<dbReference type="UniPathway" id="UPA00232"/>
<dbReference type="Proteomes" id="UP000000542">
    <property type="component" value="Chromosome 9"/>
</dbReference>
<dbReference type="GO" id="GO:0031314">
    <property type="term" value="C:extrinsic component of mitochondrial inner membrane"/>
    <property type="evidence" value="ECO:0007669"/>
    <property type="project" value="UniProtKB-UniRule"/>
</dbReference>
<dbReference type="GO" id="GO:0006744">
    <property type="term" value="P:ubiquinone biosynthetic process"/>
    <property type="evidence" value="ECO:0007669"/>
    <property type="project" value="UniProtKB-UniRule"/>
</dbReference>
<dbReference type="HAMAP" id="MF_03111">
    <property type="entry name" value="Coq4"/>
    <property type="match status" value="1"/>
</dbReference>
<dbReference type="InterPro" id="IPR007715">
    <property type="entry name" value="Coq4"/>
</dbReference>
<dbReference type="InterPro" id="IPR027540">
    <property type="entry name" value="Coq4_euk"/>
</dbReference>
<dbReference type="PANTHER" id="PTHR12922">
    <property type="entry name" value="UBIQUINONE BIOSYNTHESIS PROTEIN"/>
    <property type="match status" value="1"/>
</dbReference>
<dbReference type="PANTHER" id="PTHR12922:SF7">
    <property type="entry name" value="UBIQUINONE BIOSYNTHESIS PROTEIN COQ4 HOMOLOG, MITOCHONDRIAL"/>
    <property type="match status" value="1"/>
</dbReference>
<dbReference type="Pfam" id="PF05019">
    <property type="entry name" value="Coq4"/>
    <property type="match status" value="1"/>
</dbReference>